<protein>
    <recommendedName>
        <fullName evidence="1">UPF0246 protein Pfl01_0961</fullName>
    </recommendedName>
</protein>
<sequence length="259" mass="29454">MLMVISPAKTLDYETPPATQRFTQPQYLDHSQELIQQLRELSPAQISELMHVSDKIGGLNAARFGSWTPAFTPENAKQALLAFKGDVYTGLDAQSFSEANFDYAQKHLRMLSGLYGLLRPLDLMQPYRLEMGTKLANARGKDLYAFWGTRISEWLNEALADQGDDVLLNLASNEYFSAVKRTALNARIINTEFKDQKNGQYKIISFYAKKARGLMSRFVIQEKINDPALLKQFDVQGYRYSAEQSKPDNLVFLRDHAPE</sequence>
<gene>
    <name type="ordered locus">Pfl01_0961</name>
</gene>
<proteinExistence type="inferred from homology"/>
<reference key="1">
    <citation type="journal article" date="2009" name="Genome Biol.">
        <title>Genomic and genetic analyses of diversity and plant interactions of Pseudomonas fluorescens.</title>
        <authorList>
            <person name="Silby M.W."/>
            <person name="Cerdeno-Tarraga A.M."/>
            <person name="Vernikos G.S."/>
            <person name="Giddens S.R."/>
            <person name="Jackson R.W."/>
            <person name="Preston G.M."/>
            <person name="Zhang X.-X."/>
            <person name="Moon C.D."/>
            <person name="Gehrig S.M."/>
            <person name="Godfrey S.A.C."/>
            <person name="Knight C.G."/>
            <person name="Malone J.G."/>
            <person name="Robinson Z."/>
            <person name="Spiers A.J."/>
            <person name="Harris S."/>
            <person name="Challis G.L."/>
            <person name="Yaxley A.M."/>
            <person name="Harris D."/>
            <person name="Seeger K."/>
            <person name="Murphy L."/>
            <person name="Rutter S."/>
            <person name="Squares R."/>
            <person name="Quail M.A."/>
            <person name="Saunders E."/>
            <person name="Mavromatis K."/>
            <person name="Brettin T.S."/>
            <person name="Bentley S.D."/>
            <person name="Hothersall J."/>
            <person name="Stephens E."/>
            <person name="Thomas C.M."/>
            <person name="Parkhill J."/>
            <person name="Levy S.B."/>
            <person name="Rainey P.B."/>
            <person name="Thomson N.R."/>
        </authorList>
    </citation>
    <scope>NUCLEOTIDE SEQUENCE [LARGE SCALE GENOMIC DNA]</scope>
    <source>
        <strain>Pf0-1</strain>
    </source>
</reference>
<comment type="similarity">
    <text evidence="1">Belongs to the UPF0246 family.</text>
</comment>
<name>Y961_PSEPF</name>
<organism>
    <name type="scientific">Pseudomonas fluorescens (strain Pf0-1)</name>
    <dbReference type="NCBI Taxonomy" id="205922"/>
    <lineage>
        <taxon>Bacteria</taxon>
        <taxon>Pseudomonadati</taxon>
        <taxon>Pseudomonadota</taxon>
        <taxon>Gammaproteobacteria</taxon>
        <taxon>Pseudomonadales</taxon>
        <taxon>Pseudomonadaceae</taxon>
        <taxon>Pseudomonas</taxon>
    </lineage>
</organism>
<dbReference type="EMBL" id="CP000094">
    <property type="protein sequence ID" value="ABA72704.1"/>
    <property type="molecule type" value="Genomic_DNA"/>
</dbReference>
<dbReference type="SMR" id="Q3KHQ2"/>
<dbReference type="KEGG" id="pfo:Pfl01_0961"/>
<dbReference type="eggNOG" id="COG3022">
    <property type="taxonomic scope" value="Bacteria"/>
</dbReference>
<dbReference type="HOGENOM" id="CLU_061989_0_0_6"/>
<dbReference type="Proteomes" id="UP000002704">
    <property type="component" value="Chromosome"/>
</dbReference>
<dbReference type="GO" id="GO:0005829">
    <property type="term" value="C:cytosol"/>
    <property type="evidence" value="ECO:0007669"/>
    <property type="project" value="TreeGrafter"/>
</dbReference>
<dbReference type="GO" id="GO:0033194">
    <property type="term" value="P:response to hydroperoxide"/>
    <property type="evidence" value="ECO:0007669"/>
    <property type="project" value="TreeGrafter"/>
</dbReference>
<dbReference type="HAMAP" id="MF_00652">
    <property type="entry name" value="UPF0246"/>
    <property type="match status" value="1"/>
</dbReference>
<dbReference type="InterPro" id="IPR005583">
    <property type="entry name" value="YaaA"/>
</dbReference>
<dbReference type="NCBIfam" id="NF002541">
    <property type="entry name" value="PRK02101.1-1"/>
    <property type="match status" value="1"/>
</dbReference>
<dbReference type="NCBIfam" id="NF002542">
    <property type="entry name" value="PRK02101.1-3"/>
    <property type="match status" value="1"/>
</dbReference>
<dbReference type="PANTHER" id="PTHR30283:SF4">
    <property type="entry name" value="PEROXIDE STRESS RESISTANCE PROTEIN YAAA"/>
    <property type="match status" value="1"/>
</dbReference>
<dbReference type="PANTHER" id="PTHR30283">
    <property type="entry name" value="PEROXIDE STRESS RESPONSE PROTEIN YAAA"/>
    <property type="match status" value="1"/>
</dbReference>
<dbReference type="Pfam" id="PF03883">
    <property type="entry name" value="H2O2_YaaD"/>
    <property type="match status" value="1"/>
</dbReference>
<feature type="chain" id="PRO_0000262041" description="UPF0246 protein Pfl01_0961">
    <location>
        <begin position="1"/>
        <end position="259"/>
    </location>
</feature>
<evidence type="ECO:0000255" key="1">
    <source>
        <dbReference type="HAMAP-Rule" id="MF_00652"/>
    </source>
</evidence>
<accession>Q3KHQ2</accession>